<protein>
    <recommendedName>
        <fullName evidence="1">TDP-N-acetylfucosamine:lipid II N-acetylfucosaminyltransferase</fullName>
        <ecNumber evidence="1">2.4.1.325</ecNumber>
    </recommendedName>
    <alternativeName>
        <fullName evidence="1">4-alpha-L-fucosyltransferase</fullName>
    </alternativeName>
    <alternativeName>
        <fullName evidence="1">TDP-Fuc4NAc:lipid II Fuc4NAc transferase</fullName>
        <shortName evidence="1">Fuc4NAc transferase</shortName>
    </alternativeName>
</protein>
<organism>
    <name type="scientific">Escherichia coli (strain ATCC 8739 / DSM 1576 / NBRC 3972 / NCIMB 8545 / WDCM 00012 / Crooks)</name>
    <dbReference type="NCBI Taxonomy" id="481805"/>
    <lineage>
        <taxon>Bacteria</taxon>
        <taxon>Pseudomonadati</taxon>
        <taxon>Pseudomonadota</taxon>
        <taxon>Gammaproteobacteria</taxon>
        <taxon>Enterobacterales</taxon>
        <taxon>Enterobacteriaceae</taxon>
        <taxon>Escherichia</taxon>
    </lineage>
</organism>
<feature type="chain" id="PRO_1000083949" description="TDP-N-acetylfucosamine:lipid II N-acetylfucosaminyltransferase">
    <location>
        <begin position="1"/>
        <end position="359"/>
    </location>
</feature>
<evidence type="ECO:0000255" key="1">
    <source>
        <dbReference type="HAMAP-Rule" id="MF_01002"/>
    </source>
</evidence>
<proteinExistence type="inferred from homology"/>
<keyword id="KW-0997">Cell inner membrane</keyword>
<keyword id="KW-1003">Cell membrane</keyword>
<keyword id="KW-0328">Glycosyltransferase</keyword>
<keyword id="KW-0472">Membrane</keyword>
<keyword id="KW-0808">Transferase</keyword>
<sequence>MTVLIHVLGSDIPHHNRTVLRFFNDALAATSEHAREFMVVGKDDGLSDSCPALSVQFFPGKKSLAEAVIAKAKANRQQRFFFHGQFNPTLWLALLSGGIKPSQFFWHIWGADLYELSSGLRYKLFYPLRRLAQKRVGCVFATRGDLSFFAKTHPKVRGELLYFPTRMDPSLNTMANDRQREGKMTILVGNSGDRSNEHVAALRAVHQQFGDTVKVVVPMGYPPNNEAYIEEVRQAGLELFSEENLQVLSEKLEFDAYLALLRQCDLGYFIFARQQGIGTLCLLIQAGIPCVLNRENPFWQDMTEQHLPVLFTTDDLNEDIVREAQRQLASVDKNTIAFFSPNYLQGWQRALAIAAGEVA</sequence>
<name>WECF_ECOLC</name>
<comment type="function">
    <text evidence="1">Catalyzes the synthesis of Und-PP-GlcNAc-ManNAcA-Fuc4NAc (Lipid III), the third lipid-linked intermediate involved in ECA synthesis.</text>
</comment>
<comment type="catalytic activity">
    <reaction evidence="1">
        <text>beta-D-ManNAcA-(1-&gt;4)-alpha-D-GlcNAc-di-trans,octa-cis-undecaprenyl diphosphate + dTDP-4-acetamido-4,6-dideoxy-alpha-D-galactose = alpha-D-FucNAc4-(1-&gt;4)-beta-D-ManNAcA-(1-&gt;4)-D-GlcNAc-undecaprenyl diphosphate + dTDP + H(+)</text>
        <dbReference type="Rhea" id="RHEA:28759"/>
        <dbReference type="ChEBI" id="CHEBI:15378"/>
        <dbReference type="ChEBI" id="CHEBI:58369"/>
        <dbReference type="ChEBI" id="CHEBI:61495"/>
        <dbReference type="ChEBI" id="CHEBI:61496"/>
        <dbReference type="ChEBI" id="CHEBI:68493"/>
        <dbReference type="EC" id="2.4.1.325"/>
    </reaction>
</comment>
<comment type="pathway">
    <text evidence="1">Bacterial outer membrane biogenesis; enterobacterial common antigen biosynthesis.</text>
</comment>
<comment type="subcellular location">
    <subcellularLocation>
        <location evidence="1">Cell inner membrane</location>
        <topology evidence="1">Peripheral membrane protein</topology>
    </subcellularLocation>
</comment>
<comment type="similarity">
    <text evidence="1">Belongs to the glycosyltransferase 56 family.</text>
</comment>
<dbReference type="EC" id="2.4.1.325" evidence="1"/>
<dbReference type="EMBL" id="CP000946">
    <property type="protein sequence ID" value="ACA79807.1"/>
    <property type="molecule type" value="Genomic_DNA"/>
</dbReference>
<dbReference type="RefSeq" id="WP_000217248.1">
    <property type="nucleotide sequence ID" value="NZ_MTFT01000015.1"/>
</dbReference>
<dbReference type="SMR" id="B1IWA7"/>
<dbReference type="CAZy" id="GT56">
    <property type="family name" value="Glycosyltransferase Family 56"/>
</dbReference>
<dbReference type="KEGG" id="ecl:EcolC_4210"/>
<dbReference type="HOGENOM" id="CLU_066584_0_0_6"/>
<dbReference type="UniPathway" id="UPA00566"/>
<dbReference type="GO" id="GO:0005886">
    <property type="term" value="C:plasma membrane"/>
    <property type="evidence" value="ECO:0007669"/>
    <property type="project" value="UniProtKB-SubCell"/>
</dbReference>
<dbReference type="GO" id="GO:0102031">
    <property type="term" value="F:4-acetamido-4,6-dideoxy-D-galactose transferase activity"/>
    <property type="evidence" value="ECO:0007669"/>
    <property type="project" value="UniProtKB-EC"/>
</dbReference>
<dbReference type="GO" id="GO:0008417">
    <property type="term" value="F:fucosyltransferase activity"/>
    <property type="evidence" value="ECO:0007669"/>
    <property type="project" value="InterPro"/>
</dbReference>
<dbReference type="GO" id="GO:0009246">
    <property type="term" value="P:enterobacterial common antigen biosynthetic process"/>
    <property type="evidence" value="ECO:0007669"/>
    <property type="project" value="UniProtKB-UniRule"/>
</dbReference>
<dbReference type="GO" id="GO:0036065">
    <property type="term" value="P:fucosylation"/>
    <property type="evidence" value="ECO:0007669"/>
    <property type="project" value="InterPro"/>
</dbReference>
<dbReference type="HAMAP" id="MF_01002">
    <property type="entry name" value="WecF_RffT"/>
    <property type="match status" value="1"/>
</dbReference>
<dbReference type="InterPro" id="IPR009993">
    <property type="entry name" value="WecF"/>
</dbReference>
<dbReference type="NCBIfam" id="NF002752">
    <property type="entry name" value="PRK02797.1-1"/>
    <property type="match status" value="1"/>
</dbReference>
<dbReference type="NCBIfam" id="NF002753">
    <property type="entry name" value="PRK02797.1-2"/>
    <property type="match status" value="1"/>
</dbReference>
<dbReference type="NCBIfam" id="NF002754">
    <property type="entry name" value="PRK02797.1-3"/>
    <property type="match status" value="1"/>
</dbReference>
<dbReference type="Pfam" id="PF07429">
    <property type="entry name" value="Glyco_transf_56"/>
    <property type="match status" value="1"/>
</dbReference>
<accession>B1IWA7</accession>
<gene>
    <name evidence="1" type="primary">wecF</name>
    <name evidence="1" type="synonym">rffT</name>
    <name type="ordered locus">EcolC_4210</name>
</gene>
<reference key="1">
    <citation type="submission" date="2008-02" db="EMBL/GenBank/DDBJ databases">
        <title>Complete sequence of Escherichia coli C str. ATCC 8739.</title>
        <authorList>
            <person name="Copeland A."/>
            <person name="Lucas S."/>
            <person name="Lapidus A."/>
            <person name="Glavina del Rio T."/>
            <person name="Dalin E."/>
            <person name="Tice H."/>
            <person name="Bruce D."/>
            <person name="Goodwin L."/>
            <person name="Pitluck S."/>
            <person name="Kiss H."/>
            <person name="Brettin T."/>
            <person name="Detter J.C."/>
            <person name="Han C."/>
            <person name="Kuske C.R."/>
            <person name="Schmutz J."/>
            <person name="Larimer F."/>
            <person name="Land M."/>
            <person name="Hauser L."/>
            <person name="Kyrpides N."/>
            <person name="Mikhailova N."/>
            <person name="Ingram L."/>
            <person name="Richardson P."/>
        </authorList>
    </citation>
    <scope>NUCLEOTIDE SEQUENCE [LARGE SCALE GENOMIC DNA]</scope>
    <source>
        <strain>ATCC 8739 / DSM 1576 / NBRC 3972 / NCIMB 8545 / WDCM 00012 / Crooks</strain>
    </source>
</reference>